<gene>
    <name type="primary">ai4</name>
    <name type="ORF">DDB_G0294080</name>
</gene>
<reference key="1">
    <citation type="journal article" date="1997" name="Biochim. Biophys. Acta">
        <title>Subunits I and II of Dictyostelium cytochrome c oxidase are specified by a single open reading frame transcribed into a large polycistronic RNA.</title>
        <authorList>
            <person name="Pellizzari R."/>
            <person name="Anjard C."/>
            <person name="Bisson R."/>
        </authorList>
    </citation>
    <scope>NUCLEOTIDE SEQUENCE [GENOMIC DNA]</scope>
    <source>
        <strain>AX3</strain>
    </source>
</reference>
<reference key="2">
    <citation type="journal article" date="1997" name="Curr. Genet.">
        <title>Group-I introns in the cytochrome c oxidase genes of Dictyostelium discoideum: two related ORFs in one loop of a group-I intron, a cox1/2 hybrid gene and an unusually large cox3 gene.</title>
        <authorList>
            <person name="Ogawa S."/>
            <person name="Matsuo K."/>
            <person name="Angata K."/>
            <person name="Yanagisawa K."/>
            <person name="Tanaka Y."/>
        </authorList>
    </citation>
    <scope>NUCLEOTIDE SEQUENCE [GENOMIC DNA]</scope>
    <source>
        <strain>AX3</strain>
    </source>
</reference>
<reference key="3">
    <citation type="journal article" date="2000" name="Mol. Gen. Genet.">
        <title>The mitochondrial DNA of Dictyostelium discoideum: complete sequence, gene content and genome organization.</title>
        <authorList>
            <person name="Ogawa S."/>
            <person name="Yoshino R."/>
            <person name="Angata K."/>
            <person name="Iwamoto M."/>
            <person name="Pi M."/>
            <person name="Kuroe K."/>
            <person name="Matsuo K."/>
            <person name="Morio T."/>
            <person name="Urushihara H."/>
            <person name="Yanagisawa K."/>
            <person name="Tanaka Y."/>
        </authorList>
    </citation>
    <scope>NUCLEOTIDE SEQUENCE [LARGE SCALE GENOMIC DNA]</scope>
    <source>
        <strain>AX3</strain>
    </source>
</reference>
<reference key="4">
    <citation type="journal article" date="1997" name="Gene">
        <title>A site-specific DNA endonuclease specified by one of two ORFs encoded by a group I intron in Dictyostelium discoideum mitochondrial DNA.</title>
        <authorList>
            <person name="Ogawa S."/>
            <person name="Naito K."/>
            <person name="Angata K."/>
            <person name="Morio T."/>
            <person name="Urushihara H."/>
            <person name="Tanaka Y."/>
        </authorList>
    </citation>
    <scope>IDENTIFICATION</scope>
</reference>
<keyword id="KW-0255">Endonuclease</keyword>
<keyword id="KW-0378">Hydrolase</keyword>
<keyword id="KW-0404">Intron homing</keyword>
<keyword id="KW-0496">Mitochondrion</keyword>
<keyword id="KW-0540">Nuclease</keyword>
<keyword id="KW-1185">Reference proteome</keyword>
<name>AI4_DICDI</name>
<accession>Q9TGM4</accession>
<accession>O21046</accession>
<accession>O21151</accession>
<feature type="chain" id="PRO_0000410723" description="Intron-encoded endonuclease ai4">
    <location>
        <begin position="1"/>
        <end position="159"/>
    </location>
</feature>
<feature type="sequence conflict" description="In Ref. 1; CAA57470." evidence="2" ref="1">
    <original>GIK</original>
    <variation>E</variation>
    <location>
        <begin position="157"/>
        <end position="159"/>
    </location>
</feature>
<dbReference type="EC" id="3.1.-.-"/>
<dbReference type="EMBL" id="X81884">
    <property type="protein sequence ID" value="CAA57470.1"/>
    <property type="status" value="ALT_INIT"/>
    <property type="molecule type" value="Genomic_DNA"/>
</dbReference>
<dbReference type="EMBL" id="D50297">
    <property type="protein sequence ID" value="BAA21127.1"/>
    <property type="status" value="ALT_INIT"/>
    <property type="molecule type" value="Genomic_DNA"/>
</dbReference>
<dbReference type="EMBL" id="AB000109">
    <property type="protein sequence ID" value="BAA78059.1"/>
    <property type="molecule type" value="Genomic_DNA"/>
</dbReference>
<dbReference type="PIR" id="T43755">
    <property type="entry name" value="T43755"/>
</dbReference>
<dbReference type="RefSeq" id="NP_050077.1">
    <property type="nucleotide sequence ID" value="NC_000895.1"/>
</dbReference>
<dbReference type="SMR" id="Q9TGM4"/>
<dbReference type="STRING" id="44689.Q9TGM4"/>
<dbReference type="KEGG" id="ddi:DidioMp10"/>
<dbReference type="dictyBase" id="DDB_G0294080">
    <property type="gene designation" value="ai4"/>
</dbReference>
<dbReference type="VEuPathDB" id="AmoebaDB:DidioMp10"/>
<dbReference type="InParanoid" id="Q9TGM4"/>
<dbReference type="PRO" id="PR:Q9TGM4"/>
<dbReference type="Proteomes" id="UP000002195">
    <property type="component" value="Mitochondrion"/>
</dbReference>
<dbReference type="GO" id="GO:0005739">
    <property type="term" value="C:mitochondrion"/>
    <property type="evidence" value="ECO:0007669"/>
    <property type="project" value="UniProtKB-SubCell"/>
</dbReference>
<dbReference type="GO" id="GO:0004519">
    <property type="term" value="F:endonuclease activity"/>
    <property type="evidence" value="ECO:0007669"/>
    <property type="project" value="UniProtKB-KW"/>
</dbReference>
<dbReference type="GO" id="GO:0006314">
    <property type="term" value="P:intron homing"/>
    <property type="evidence" value="ECO:0007669"/>
    <property type="project" value="UniProtKB-KW"/>
</dbReference>
<dbReference type="Gene3D" id="3.10.28.10">
    <property type="entry name" value="Homing endonucleases"/>
    <property type="match status" value="2"/>
</dbReference>
<dbReference type="InterPro" id="IPR027434">
    <property type="entry name" value="Homing_endonucl"/>
</dbReference>
<dbReference type="InterPro" id="IPR004860">
    <property type="entry name" value="LAGLIDADG_dom"/>
</dbReference>
<dbReference type="Pfam" id="PF03161">
    <property type="entry name" value="LAGLIDADG_2"/>
    <property type="match status" value="1"/>
</dbReference>
<dbReference type="SUPFAM" id="SSF55608">
    <property type="entry name" value="Homing endonucleases"/>
    <property type="match status" value="1"/>
</dbReference>
<geneLocation type="mitochondrion"/>
<protein>
    <recommendedName>
        <fullName>Intron-encoded endonuclease ai4</fullName>
        <ecNumber>3.1.-.-</ecNumber>
    </recommendedName>
    <alternativeName>
        <fullName>Cox1/2 intron 3 orf</fullName>
    </alternativeName>
</protein>
<comment type="function">
    <text evidence="1">Mitochondrial DNA endonuclease involved in intron homing.</text>
</comment>
<comment type="subcellular location">
    <subcellularLocation>
        <location evidence="1">Mitochondrion</location>
    </subcellularLocation>
</comment>
<comment type="similarity">
    <text evidence="2">Belongs to the LAGLIDADG endonuclease family.</text>
</comment>
<comment type="sequence caution" evidence="2">
    <conflict type="erroneous initiation">
        <sequence resource="EMBL-CDS" id="BAA21127"/>
    </conflict>
    <text>Extended N-terminus.</text>
</comment>
<comment type="sequence caution" evidence="2">
    <conflict type="erroneous initiation">
        <sequence resource="EMBL-CDS" id="CAA57470"/>
    </conflict>
    <text>Extended N-terminus.</text>
</comment>
<organism>
    <name type="scientific">Dictyostelium discoideum</name>
    <name type="common">Social amoeba</name>
    <dbReference type="NCBI Taxonomy" id="44689"/>
    <lineage>
        <taxon>Eukaryota</taxon>
        <taxon>Amoebozoa</taxon>
        <taxon>Evosea</taxon>
        <taxon>Eumycetozoa</taxon>
        <taxon>Dictyostelia</taxon>
        <taxon>Dictyosteliales</taxon>
        <taxon>Dictyosteliaceae</taxon>
        <taxon>Dictyostelium</taxon>
    </lineage>
</organism>
<sequence length="159" mass="19358">MIYEFFNKNGYCTNNIPRKYIVKLKHNDDVKDFERYEFVTYTFRSFKYIYEMFYKKQKKVLHLEKIKEYLDERALAHWIMDDGGYTGAGIRIATNAFTLKEVMFLKELLEDKFKLKCTIQEIYIKDKWSIYITKDSMTHLISIIKPYMHPSMYYKLGIK</sequence>
<proteinExistence type="inferred from homology"/>
<evidence type="ECO:0000250" key="1"/>
<evidence type="ECO:0000305" key="2"/>